<gene>
    <name type="primary">norC</name>
</gene>
<proteinExistence type="inferred from homology"/>
<keyword id="KW-1003">Cell membrane</keyword>
<keyword id="KW-0249">Electron transport</keyword>
<keyword id="KW-0349">Heme</keyword>
<keyword id="KW-0408">Iron</keyword>
<keyword id="KW-0472">Membrane</keyword>
<keyword id="KW-0479">Metal-binding</keyword>
<keyword id="KW-0679">Respiratory chain</keyword>
<keyword id="KW-0735">Signal-anchor</keyword>
<keyword id="KW-0812">Transmembrane</keyword>
<keyword id="KW-1133">Transmembrane helix</keyword>
<keyword id="KW-0813">Transport</keyword>
<dbReference type="EMBL" id="U28078">
    <property type="protein sequence ID" value="AAA68970.1"/>
    <property type="molecule type" value="Genomic_DNA"/>
</dbReference>
<dbReference type="EMBL" id="AB014090">
    <property type="protein sequence ID" value="BAA32545.1"/>
    <property type="molecule type" value="Genomic_DNA"/>
</dbReference>
<dbReference type="RefSeq" id="WP_011748764.1">
    <property type="nucleotide sequence ID" value="NZ_PPGA01000003.1"/>
</dbReference>
<dbReference type="SMR" id="Q51662"/>
<dbReference type="TCDB" id="3.D.4.10.1">
    <property type="family name" value="the proton-translocating cytochrome oxidase (cox) superfamily"/>
</dbReference>
<dbReference type="OMA" id="MARNIFY"/>
<dbReference type="BioCyc" id="MetaCyc:MONOMER-16873"/>
<dbReference type="BRENDA" id="1.7.2.5">
    <property type="organism ID" value="3341"/>
</dbReference>
<dbReference type="GO" id="GO:0005886">
    <property type="term" value="C:plasma membrane"/>
    <property type="evidence" value="ECO:0007669"/>
    <property type="project" value="UniProtKB-SubCell"/>
</dbReference>
<dbReference type="GO" id="GO:0009055">
    <property type="term" value="F:electron transfer activity"/>
    <property type="evidence" value="ECO:0007669"/>
    <property type="project" value="InterPro"/>
</dbReference>
<dbReference type="GO" id="GO:0020037">
    <property type="term" value="F:heme binding"/>
    <property type="evidence" value="ECO:0007669"/>
    <property type="project" value="InterPro"/>
</dbReference>
<dbReference type="GO" id="GO:0046872">
    <property type="term" value="F:metal ion binding"/>
    <property type="evidence" value="ECO:0007669"/>
    <property type="project" value="UniProtKB-KW"/>
</dbReference>
<dbReference type="GO" id="GO:0016966">
    <property type="term" value="F:nitric oxide reductase activity"/>
    <property type="evidence" value="ECO:0000315"/>
    <property type="project" value="CACAO"/>
</dbReference>
<dbReference type="FunFam" id="1.10.760.10:FF:000058">
    <property type="entry name" value="Nitric oxide reductase subunit C"/>
    <property type="match status" value="1"/>
</dbReference>
<dbReference type="Gene3D" id="1.10.760.10">
    <property type="entry name" value="Cytochrome c-like domain"/>
    <property type="match status" value="1"/>
</dbReference>
<dbReference type="InterPro" id="IPR009056">
    <property type="entry name" value="Cyt_c-like_dom"/>
</dbReference>
<dbReference type="InterPro" id="IPR036909">
    <property type="entry name" value="Cyt_c-like_dom_sf"/>
</dbReference>
<dbReference type="Pfam" id="PF00034">
    <property type="entry name" value="Cytochrom_C"/>
    <property type="match status" value="1"/>
</dbReference>
<dbReference type="SUPFAM" id="SSF46626">
    <property type="entry name" value="Cytochrome c"/>
    <property type="match status" value="1"/>
</dbReference>
<dbReference type="PROSITE" id="PS51007">
    <property type="entry name" value="CYTC"/>
    <property type="match status" value="1"/>
</dbReference>
<comment type="function">
    <text>Component of the anaerobic respiratory chain that transforms nitrate to dinitrogen (denitrification).</text>
</comment>
<comment type="subunit">
    <text>Heterodimer of cytochromes b (large subunit) and c (small subunit).</text>
</comment>
<comment type="subcellular location">
    <subcellularLocation>
        <location evidence="1">Cell membrane</location>
        <topology evidence="1">Single-pass membrane protein</topology>
    </subcellularLocation>
    <text evidence="1">May be attached to the membrane by a signal-anchor.</text>
</comment>
<evidence type="ECO:0000250" key="1"/>
<evidence type="ECO:0000255" key="2"/>
<evidence type="ECO:0000255" key="3">
    <source>
        <dbReference type="PROSITE-ProRule" id="PRU00433"/>
    </source>
</evidence>
<protein>
    <recommendedName>
        <fullName>Nitric oxide reductase subunit C</fullName>
    </recommendedName>
    <alternativeName>
        <fullName>NOR small subunit</fullName>
    </alternativeName>
    <alternativeName>
        <fullName>Nitric oxide reductase cytochrome c subunit</fullName>
    </alternativeName>
</protein>
<accession>Q51662</accession>
<name>NORC_PARDE</name>
<reference key="1">
    <citation type="journal article" date="1996" name="Eur. J. Biochem.">
        <title>Mutational analysis of the nor gene cluster which encodes nitric-oxide reductase from Paracoccus denitrificans.</title>
        <authorList>
            <person name="de Boer A.P.N."/>
            <person name="van der Oost J."/>
            <person name="Reijnders W.N.M."/>
            <person name="Westerhoff H.V."/>
            <person name="Stouthamer A.H."/>
            <person name="van Spanning R.J."/>
        </authorList>
    </citation>
    <scope>NUCLEOTIDE SEQUENCE [GENOMIC DNA]</scope>
    <source>
        <strain>Pd 1222</strain>
    </source>
</reference>
<reference key="2">
    <citation type="submission" date="1998-05" db="EMBL/GenBank/DDBJ databases">
        <title>Cloning and nucleotide sequence of the nitric oxide reductase locus in Paracoccus denitrificans IFO 12442.</title>
        <authorList>
            <person name="Murai K."/>
            <person name="Miyake K."/>
            <person name="Andoh J."/>
            <person name="Iijima S."/>
        </authorList>
    </citation>
    <scope>NUCLEOTIDE SEQUENCE [GENOMIC DNA]</scope>
    <source>
        <strain>NBRC 12442</strain>
    </source>
</reference>
<reference key="3">
    <citation type="journal article" date="1998" name="Biochemistry">
        <title>The active site of the bacterial nitric oxide reductase is a dinuclear iron center.</title>
        <authorList>
            <person name="Hendriks J."/>
            <person name="Warne A."/>
            <person name="Gohlke U."/>
            <person name="Haltia T."/>
            <person name="Ludovici C."/>
            <person name="Luebben M."/>
            <person name="Saraste M."/>
        </authorList>
    </citation>
    <scope>EPR SPECTROSCOPY</scope>
</reference>
<sequence>MSEIMTKNMARNVFYGGSIFFILIFGALTVHSHIYARTKAVDESQLTPSVVEGKHIWERNACIDCHTLLGEGAYFAPELGNVMKRWGVQDDPDSAFETLKGWMESMPTGIEGRRQMPRFDLTDEEFRALSDFLLWTGTINTQNWPPNDAG</sequence>
<feature type="initiator methionine" description="Removed" evidence="1">
    <location>
        <position position="1"/>
    </location>
</feature>
<feature type="chain" id="PRO_0000108422" description="Nitric oxide reductase subunit C">
    <location>
        <begin position="2"/>
        <end position="150"/>
    </location>
</feature>
<feature type="transmembrane region" description="Helical; Signal-anchor" evidence="2">
    <location>
        <begin position="13"/>
        <end position="29"/>
    </location>
</feature>
<feature type="binding site" description="covalent" evidence="3">
    <location>
        <position position="62"/>
    </location>
    <ligand>
        <name>heme c</name>
        <dbReference type="ChEBI" id="CHEBI:61717"/>
    </ligand>
</feature>
<feature type="binding site" description="covalent" evidence="3">
    <location>
        <position position="65"/>
    </location>
    <ligand>
        <name>heme c</name>
        <dbReference type="ChEBI" id="CHEBI:61717"/>
    </ligand>
</feature>
<feature type="binding site" description="axial binding residue" evidence="3">
    <location>
        <position position="66"/>
    </location>
    <ligand>
        <name>heme c</name>
        <dbReference type="ChEBI" id="CHEBI:61717"/>
    </ligand>
    <ligandPart>
        <name>Fe</name>
        <dbReference type="ChEBI" id="CHEBI:18248"/>
    </ligandPart>
</feature>
<organism>
    <name type="scientific">Paracoccus denitrificans</name>
    <dbReference type="NCBI Taxonomy" id="266"/>
    <lineage>
        <taxon>Bacteria</taxon>
        <taxon>Pseudomonadati</taxon>
        <taxon>Pseudomonadota</taxon>
        <taxon>Alphaproteobacteria</taxon>
        <taxon>Rhodobacterales</taxon>
        <taxon>Paracoccaceae</taxon>
        <taxon>Paracoccus</taxon>
    </lineage>
</organism>